<accession>Q559K0</accession>
<accession>Q86KG8</accession>
<protein>
    <recommendedName>
        <fullName>Folate-like transporter DDB_G0272544</fullName>
    </recommendedName>
</protein>
<sequence length="566" mass="64699">MEDSDKENTLLLPNNKYRNQNFIRNQDEDENENENNDNLENDNNKRNYISINNYEPYKEIDNNNNKNNNNNNIINNNNKINFYNNLIPRIKSYFQEIKPFLKYCSFSFLFSFDPSEPYLVDYFTNVLGINQTIVYQEIYPYWTYSYFVFLLIFGILGEIIGYKVIIIIGMVAKILTIGVLLSTNNIIWMILEQITEGLSYSAYTVFLAYIYFSLDTSEYQKMACRVNAGYLVGIVSSGLLGQLLVEQRLPLVYLLSIACGTNILALILALGFSNYKIDQKFSLKEVISDLFGTFKNADIVRWYIWSGIAISIHQIVITYWQNLFLQVNDEQSWNGYISASAYFFASFFAIIPSKLGNKINNIQGIILVLFGLLGGGLLVLMGFGGSTVVSALSFIIYNCCFEFVSPIVNVQIAKKLSSRIGVLFSFNIMVALTIQVLVQSAVGKQFLNLDIKTQFYYYGACLFFLSFGFAILFGFLFLKKKINSNSNSNSNVDVLIVNHNTQNQNSEEKKKKKELYYNANIIDFENNNNNNNNNNNNNNNNNNNNNNNNNNNNNNNVGIGGNDNFK</sequence>
<evidence type="ECO:0000250" key="1"/>
<evidence type="ECO:0000255" key="2"/>
<evidence type="ECO:0000256" key="3">
    <source>
        <dbReference type="SAM" id="MobiDB-lite"/>
    </source>
</evidence>
<evidence type="ECO:0000305" key="4"/>
<reference key="1">
    <citation type="journal article" date="2002" name="Nature">
        <title>Sequence and analysis of chromosome 2 of Dictyostelium discoideum.</title>
        <authorList>
            <person name="Gloeckner G."/>
            <person name="Eichinger L."/>
            <person name="Szafranski K."/>
            <person name="Pachebat J.A."/>
            <person name="Bankier A.T."/>
            <person name="Dear P.H."/>
            <person name="Lehmann R."/>
            <person name="Baumgart C."/>
            <person name="Parra G."/>
            <person name="Abril J.F."/>
            <person name="Guigo R."/>
            <person name="Kumpf K."/>
            <person name="Tunggal B."/>
            <person name="Cox E.C."/>
            <person name="Quail M.A."/>
            <person name="Platzer M."/>
            <person name="Rosenthal A."/>
            <person name="Noegel A.A."/>
        </authorList>
    </citation>
    <scope>NUCLEOTIDE SEQUENCE [LARGE SCALE GENOMIC DNA]</scope>
    <source>
        <strain>AX4</strain>
    </source>
</reference>
<reference key="2">
    <citation type="journal article" date="2005" name="Nature">
        <title>The genome of the social amoeba Dictyostelium discoideum.</title>
        <authorList>
            <person name="Eichinger L."/>
            <person name="Pachebat J.A."/>
            <person name="Gloeckner G."/>
            <person name="Rajandream M.A."/>
            <person name="Sucgang R."/>
            <person name="Berriman M."/>
            <person name="Song J."/>
            <person name="Olsen R."/>
            <person name="Szafranski K."/>
            <person name="Xu Q."/>
            <person name="Tunggal B."/>
            <person name="Kummerfeld S."/>
            <person name="Madera M."/>
            <person name="Konfortov B.A."/>
            <person name="Rivero F."/>
            <person name="Bankier A.T."/>
            <person name="Lehmann R."/>
            <person name="Hamlin N."/>
            <person name="Davies R."/>
            <person name="Gaudet P."/>
            <person name="Fey P."/>
            <person name="Pilcher K."/>
            <person name="Chen G."/>
            <person name="Saunders D."/>
            <person name="Sodergren E.J."/>
            <person name="Davis P."/>
            <person name="Kerhornou A."/>
            <person name="Nie X."/>
            <person name="Hall N."/>
            <person name="Anjard C."/>
            <person name="Hemphill L."/>
            <person name="Bason N."/>
            <person name="Farbrother P."/>
            <person name="Desany B."/>
            <person name="Just E."/>
            <person name="Morio T."/>
            <person name="Rost R."/>
            <person name="Churcher C.M."/>
            <person name="Cooper J."/>
            <person name="Haydock S."/>
            <person name="van Driessche N."/>
            <person name="Cronin A."/>
            <person name="Goodhead I."/>
            <person name="Muzny D.M."/>
            <person name="Mourier T."/>
            <person name="Pain A."/>
            <person name="Lu M."/>
            <person name="Harper D."/>
            <person name="Lindsay R."/>
            <person name="Hauser H."/>
            <person name="James K.D."/>
            <person name="Quiles M."/>
            <person name="Madan Babu M."/>
            <person name="Saito T."/>
            <person name="Buchrieser C."/>
            <person name="Wardroper A."/>
            <person name="Felder M."/>
            <person name="Thangavelu M."/>
            <person name="Johnson D."/>
            <person name="Knights A."/>
            <person name="Loulseged H."/>
            <person name="Mungall K.L."/>
            <person name="Oliver K."/>
            <person name="Price C."/>
            <person name="Quail M.A."/>
            <person name="Urushihara H."/>
            <person name="Hernandez J."/>
            <person name="Rabbinowitsch E."/>
            <person name="Steffen D."/>
            <person name="Sanders M."/>
            <person name="Ma J."/>
            <person name="Kohara Y."/>
            <person name="Sharp S."/>
            <person name="Simmonds M.N."/>
            <person name="Spiegler S."/>
            <person name="Tivey A."/>
            <person name="Sugano S."/>
            <person name="White B."/>
            <person name="Walker D."/>
            <person name="Woodward J.R."/>
            <person name="Winckler T."/>
            <person name="Tanaka Y."/>
            <person name="Shaulsky G."/>
            <person name="Schleicher M."/>
            <person name="Weinstock G.M."/>
            <person name="Rosenthal A."/>
            <person name="Cox E.C."/>
            <person name="Chisholm R.L."/>
            <person name="Gibbs R.A."/>
            <person name="Loomis W.F."/>
            <person name="Platzer M."/>
            <person name="Kay R.R."/>
            <person name="Williams J.G."/>
            <person name="Dear P.H."/>
            <person name="Noegel A.A."/>
            <person name="Barrell B.G."/>
            <person name="Kuspa A."/>
        </authorList>
    </citation>
    <scope>NUCLEOTIDE SEQUENCE [LARGE SCALE GENOMIC DNA]</scope>
    <source>
        <strain>AX4</strain>
    </source>
</reference>
<proteinExistence type="inferred from homology"/>
<dbReference type="EMBL" id="AAFI02000008">
    <property type="protein sequence ID" value="EAL71196.2"/>
    <property type="molecule type" value="Genomic_DNA"/>
</dbReference>
<dbReference type="RefSeq" id="XP_645106.2">
    <property type="nucleotide sequence ID" value="XM_640014.2"/>
</dbReference>
<dbReference type="SMR" id="Q559K0"/>
<dbReference type="FunCoup" id="Q559K0">
    <property type="interactions" value="12"/>
</dbReference>
<dbReference type="STRING" id="44689.Q559K0"/>
<dbReference type="TCDB" id="2.A.48.1.5">
    <property type="family name" value="the reduced folate carrier (rfc) family"/>
</dbReference>
<dbReference type="PaxDb" id="44689-DDB0302503"/>
<dbReference type="EnsemblProtists" id="EAL71196">
    <property type="protein sequence ID" value="EAL71196"/>
    <property type="gene ID" value="DDB_G0272544"/>
</dbReference>
<dbReference type="GeneID" id="8618500"/>
<dbReference type="KEGG" id="ddi:DDB_G0272544"/>
<dbReference type="dictyBase" id="DDB_G0272544"/>
<dbReference type="VEuPathDB" id="AmoebaDB:DDB_G0272544"/>
<dbReference type="eggNOG" id="KOG3810">
    <property type="taxonomic scope" value="Eukaryota"/>
</dbReference>
<dbReference type="HOGENOM" id="CLU_481855_0_0_1"/>
<dbReference type="InParanoid" id="Q559K0"/>
<dbReference type="OMA" id="DIWACYA"/>
<dbReference type="PhylomeDB" id="Q559K0"/>
<dbReference type="Reactome" id="R-DDI-196757">
    <property type="pathway name" value="Metabolism of folate and pterines"/>
</dbReference>
<dbReference type="Reactome" id="R-DDI-196819">
    <property type="pathway name" value="Vitamin B1 (thiamin) metabolism"/>
</dbReference>
<dbReference type="PRO" id="PR:Q559K0"/>
<dbReference type="Proteomes" id="UP000002195">
    <property type="component" value="Chromosome 2"/>
</dbReference>
<dbReference type="GO" id="GO:0005886">
    <property type="term" value="C:plasma membrane"/>
    <property type="evidence" value="ECO:0000318"/>
    <property type="project" value="GO_Central"/>
</dbReference>
<dbReference type="GO" id="GO:0005542">
    <property type="term" value="F:folic acid binding"/>
    <property type="evidence" value="ECO:0007669"/>
    <property type="project" value="UniProtKB-KW"/>
</dbReference>
<dbReference type="GO" id="GO:0090482">
    <property type="term" value="F:vitamin transmembrane transporter activity"/>
    <property type="evidence" value="ECO:0007669"/>
    <property type="project" value="InterPro"/>
</dbReference>
<dbReference type="GO" id="GO:0055085">
    <property type="term" value="P:transmembrane transport"/>
    <property type="evidence" value="ECO:0000318"/>
    <property type="project" value="GO_Central"/>
</dbReference>
<dbReference type="Gene3D" id="1.20.1250.20">
    <property type="entry name" value="MFS general substrate transporter like domains"/>
    <property type="match status" value="1"/>
</dbReference>
<dbReference type="InterPro" id="IPR002666">
    <property type="entry name" value="Folate_carrier"/>
</dbReference>
<dbReference type="InterPro" id="IPR036259">
    <property type="entry name" value="MFS_trans_sf"/>
</dbReference>
<dbReference type="PANTHER" id="PTHR10686">
    <property type="entry name" value="FOLATE TRANSPORTER"/>
    <property type="match status" value="1"/>
</dbReference>
<dbReference type="PANTHER" id="PTHR10686:SF18">
    <property type="entry name" value="IP11787P-RELATED"/>
    <property type="match status" value="1"/>
</dbReference>
<dbReference type="Pfam" id="PF01770">
    <property type="entry name" value="Folate_carrier"/>
    <property type="match status" value="2"/>
</dbReference>
<dbReference type="SUPFAM" id="SSF103473">
    <property type="entry name" value="MFS general substrate transporter"/>
    <property type="match status" value="1"/>
</dbReference>
<comment type="function">
    <text evidence="1">Folate transporter.</text>
</comment>
<comment type="subcellular location">
    <subcellularLocation>
        <location evidence="4">Membrane</location>
        <topology evidence="4">Multi-pass membrane protein</topology>
    </subcellularLocation>
</comment>
<comment type="similarity">
    <text evidence="4">Belongs to the reduced folate carrier (RFC) transporter (TC 2.A.48) family.</text>
</comment>
<name>Y2544_DICDI</name>
<keyword id="KW-0175">Coiled coil</keyword>
<keyword id="KW-0290">Folate-binding</keyword>
<keyword id="KW-0472">Membrane</keyword>
<keyword id="KW-1185">Reference proteome</keyword>
<keyword id="KW-0812">Transmembrane</keyword>
<keyword id="KW-1133">Transmembrane helix</keyword>
<keyword id="KW-0813">Transport</keyword>
<gene>
    <name type="ORF">DDB_G0272544</name>
</gene>
<organism>
    <name type="scientific">Dictyostelium discoideum</name>
    <name type="common">Social amoeba</name>
    <dbReference type="NCBI Taxonomy" id="44689"/>
    <lineage>
        <taxon>Eukaryota</taxon>
        <taxon>Amoebozoa</taxon>
        <taxon>Evosea</taxon>
        <taxon>Eumycetozoa</taxon>
        <taxon>Dictyostelia</taxon>
        <taxon>Dictyosteliales</taxon>
        <taxon>Dictyosteliaceae</taxon>
        <taxon>Dictyostelium</taxon>
    </lineage>
</organism>
<feature type="chain" id="PRO_0000369251" description="Folate-like transporter DDB_G0272544">
    <location>
        <begin position="1"/>
        <end position="566"/>
    </location>
</feature>
<feature type="transmembrane region" description="Helical" evidence="2">
    <location>
        <begin position="148"/>
        <end position="168"/>
    </location>
</feature>
<feature type="transmembrane region" description="Helical" evidence="2">
    <location>
        <begin position="171"/>
        <end position="191"/>
    </location>
</feature>
<feature type="transmembrane region" description="Helical" evidence="2">
    <location>
        <begin position="194"/>
        <end position="214"/>
    </location>
</feature>
<feature type="transmembrane region" description="Helical" evidence="2">
    <location>
        <begin position="226"/>
        <end position="246"/>
    </location>
</feature>
<feature type="transmembrane region" description="Helical" evidence="2">
    <location>
        <begin position="252"/>
        <end position="272"/>
    </location>
</feature>
<feature type="transmembrane region" description="Helical" evidence="2">
    <location>
        <begin position="304"/>
        <end position="324"/>
    </location>
</feature>
<feature type="transmembrane region" description="Helical" evidence="2">
    <location>
        <begin position="332"/>
        <end position="352"/>
    </location>
</feature>
<feature type="transmembrane region" description="Helical" evidence="2">
    <location>
        <begin position="364"/>
        <end position="384"/>
    </location>
</feature>
<feature type="transmembrane region" description="Helical" evidence="2">
    <location>
        <begin position="388"/>
        <end position="408"/>
    </location>
</feature>
<feature type="transmembrane region" description="Helical" evidence="2">
    <location>
        <begin position="420"/>
        <end position="440"/>
    </location>
</feature>
<feature type="transmembrane region" description="Helical" evidence="2">
    <location>
        <begin position="458"/>
        <end position="478"/>
    </location>
</feature>
<feature type="region of interest" description="Disordered" evidence="3">
    <location>
        <begin position="25"/>
        <end position="46"/>
    </location>
</feature>
<feature type="region of interest" description="Disordered" evidence="3">
    <location>
        <begin position="526"/>
        <end position="566"/>
    </location>
</feature>
<feature type="coiled-coil region" evidence="2">
    <location>
        <begin position="24"/>
        <end position="81"/>
    </location>
</feature>
<feature type="coiled-coil region" evidence="2">
    <location>
        <begin position="517"/>
        <end position="544"/>
    </location>
</feature>
<feature type="compositionally biased region" description="Acidic residues" evidence="3">
    <location>
        <begin position="27"/>
        <end position="40"/>
    </location>
</feature>
<feature type="compositionally biased region" description="Low complexity" evidence="3">
    <location>
        <begin position="526"/>
        <end position="556"/>
    </location>
</feature>